<comment type="function">
    <text evidence="1">Facilitates the functional incorporation of the urease nickel metallocenter. This process requires GTP hydrolysis, probably effectuated by UreG.</text>
</comment>
<comment type="subunit">
    <text evidence="1">Homodimer. UreD, UreF and UreG form a complex that acts as a GTP-hydrolysis-dependent molecular chaperone, activating the urease apoprotein by helping to assemble the nickel containing metallocenter of UreC. The UreE protein probably delivers the nickel.</text>
</comment>
<comment type="subcellular location">
    <subcellularLocation>
        <location evidence="1">Cytoplasm</location>
    </subcellularLocation>
</comment>
<comment type="induction">
    <text evidence="2">By urea and nitrogen starvation.</text>
</comment>
<comment type="similarity">
    <text evidence="1">Belongs to the SIMIBI class G3E GTPase family. UreG subfamily.</text>
</comment>
<sequence>MGPIRIGVGGPVGAGKTQLVERITRALIDEVSMAAITNDIYTIEDAKILAANGVLPEERIVGIETGGCPHTAIREDTSMNDAAIKDLVERFPDLELIFVESGGDNLSATFSPELVDFSIYIIDVAQGEKIPRKAGQGMIKSDLFIINKTDLAPYVGANLDVMVEDAKAFRKNKPFCLTNLRTDDGLDKVLEWIRHEVMMQDLQEA</sequence>
<reference key="1">
    <citation type="journal article" date="2000" name="DNA Seq.">
        <title>Structure of the urease operon of Corynebacterium glutamicum.</title>
        <authorList>
            <person name="Puskas L.G."/>
            <person name="Inui M."/>
            <person name="Yukawa H."/>
        </authorList>
    </citation>
    <scope>NUCLEOTIDE SEQUENCE [GENOMIC DNA]</scope>
    <scope>INDUCTION</scope>
    <source>
        <strain>ATCC 13869 / DSMZ 1412 / NCIMB 9567</strain>
    </source>
</reference>
<reference key="2">
    <citation type="journal article" date="2000" name="FEMS Microbiol. Lett.">
        <title>Urease of Corynebacterium glutamicum: organization of corresponding genes and investigation of activity.</title>
        <authorList>
            <person name="Nolden L."/>
            <person name="Beckers G."/>
            <person name="Moeckel B."/>
            <person name="Pfefferle W."/>
            <person name="Nampoothiri K.M."/>
            <person name="Kraemer R."/>
            <person name="Burkovski A."/>
        </authorList>
    </citation>
    <scope>NUCLEOTIDE SEQUENCE [GENOMIC DNA]</scope>
    <scope>PROBABLE OPERON STRUCTURE</scope>
    <source>
        <strain>ATCC 13032 / DSM 20300 / JCM 1318 / BCRC 11384 / CCUG 27702 / LMG 3730 / NBRC 12168 / NCIMB 10025 / NRRL B-2784 / 534</strain>
    </source>
</reference>
<reference key="3">
    <citation type="journal article" date="2003" name="Appl. Microbiol. Biotechnol.">
        <title>The Corynebacterium glutamicum genome: features and impacts on biotechnological processes.</title>
        <authorList>
            <person name="Ikeda M."/>
            <person name="Nakagawa S."/>
        </authorList>
    </citation>
    <scope>NUCLEOTIDE SEQUENCE [LARGE SCALE GENOMIC DNA]</scope>
    <source>
        <strain>ATCC 13032 / DSM 20300 / JCM 1318 / BCRC 11384 / CCUG 27702 / LMG 3730 / NBRC 12168 / NCIMB 10025 / NRRL B-2784 / 534</strain>
    </source>
</reference>
<reference key="4">
    <citation type="journal article" date="2003" name="J. Biotechnol.">
        <title>The complete Corynebacterium glutamicum ATCC 13032 genome sequence and its impact on the production of L-aspartate-derived amino acids and vitamins.</title>
        <authorList>
            <person name="Kalinowski J."/>
            <person name="Bathe B."/>
            <person name="Bartels D."/>
            <person name="Bischoff N."/>
            <person name="Bott M."/>
            <person name="Burkovski A."/>
            <person name="Dusch N."/>
            <person name="Eggeling L."/>
            <person name="Eikmanns B.J."/>
            <person name="Gaigalat L."/>
            <person name="Goesmann A."/>
            <person name="Hartmann M."/>
            <person name="Huthmacher K."/>
            <person name="Kraemer R."/>
            <person name="Linke B."/>
            <person name="McHardy A.C."/>
            <person name="Meyer F."/>
            <person name="Moeckel B."/>
            <person name="Pfefferle W."/>
            <person name="Puehler A."/>
            <person name="Rey D.A."/>
            <person name="Rueckert C."/>
            <person name="Rupp O."/>
            <person name="Sahm H."/>
            <person name="Wendisch V.F."/>
            <person name="Wiegraebe I."/>
            <person name="Tauch A."/>
        </authorList>
    </citation>
    <scope>NUCLEOTIDE SEQUENCE [LARGE SCALE GENOMIC DNA]</scope>
    <source>
        <strain>ATCC 13032 / DSM 20300 / JCM 1318 / BCRC 11384 / CCUG 27702 / LMG 3730 / NBRC 12168 / NCIMB 10025 / NRRL B-2784 / 534</strain>
    </source>
</reference>
<protein>
    <recommendedName>
        <fullName evidence="1">Urease accessory protein UreG</fullName>
    </recommendedName>
</protein>
<keyword id="KW-0143">Chaperone</keyword>
<keyword id="KW-0963">Cytoplasm</keyword>
<keyword id="KW-0342">GTP-binding</keyword>
<keyword id="KW-0996">Nickel insertion</keyword>
<keyword id="KW-0547">Nucleotide-binding</keyword>
<keyword id="KW-1185">Reference proteome</keyword>
<proteinExistence type="evidence at transcript level"/>
<evidence type="ECO:0000255" key="1">
    <source>
        <dbReference type="HAMAP-Rule" id="MF_01389"/>
    </source>
</evidence>
<evidence type="ECO:0000269" key="2">
    <source>
    </source>
</evidence>
<evidence type="ECO:0000305" key="3"/>
<gene>
    <name evidence="1" type="primary">ureG</name>
    <name type="ordered locus">Cgl0089</name>
    <name type="ordered locus">cg0118</name>
</gene>
<feature type="chain" id="PRO_0000347384" description="Urease accessory protein UreG">
    <location>
        <begin position="1"/>
        <end position="205"/>
    </location>
</feature>
<feature type="binding site" evidence="1">
    <location>
        <begin position="10"/>
        <end position="17"/>
    </location>
    <ligand>
        <name>GTP</name>
        <dbReference type="ChEBI" id="CHEBI:37565"/>
    </ligand>
</feature>
<feature type="sequence conflict" description="In Ref. 1; BAA88557." evidence="3" ref="1">
    <original>M</original>
    <variation>I</variation>
    <location>
        <position position="198"/>
    </location>
</feature>
<organism>
    <name type="scientific">Corynebacterium glutamicum (strain ATCC 13032 / DSM 20300 / JCM 1318 / BCRC 11384 / CCUG 27702 / LMG 3730 / NBRC 12168 / NCIMB 10025 / NRRL B-2784 / 534)</name>
    <dbReference type="NCBI Taxonomy" id="196627"/>
    <lineage>
        <taxon>Bacteria</taxon>
        <taxon>Bacillati</taxon>
        <taxon>Actinomycetota</taxon>
        <taxon>Actinomycetes</taxon>
        <taxon>Mycobacteriales</taxon>
        <taxon>Corynebacteriaceae</taxon>
        <taxon>Corynebacterium</taxon>
    </lineage>
</organism>
<accession>Q79VJ1</accession>
<accession>Q9L417</accession>
<accession>Q9RHM1</accession>
<dbReference type="EMBL" id="AB029154">
    <property type="protein sequence ID" value="BAA88557.1"/>
    <property type="molecule type" value="Genomic_DNA"/>
</dbReference>
<dbReference type="EMBL" id="AJ251883">
    <property type="protein sequence ID" value="CAB81940.1"/>
    <property type="molecule type" value="Genomic_DNA"/>
</dbReference>
<dbReference type="EMBL" id="BA000036">
    <property type="protein sequence ID" value="BAB97482.1"/>
    <property type="molecule type" value="Genomic_DNA"/>
</dbReference>
<dbReference type="EMBL" id="BX927148">
    <property type="protein sequence ID" value="CAF18657.1"/>
    <property type="molecule type" value="Genomic_DNA"/>
</dbReference>
<dbReference type="RefSeq" id="NP_599341.1">
    <property type="nucleotide sequence ID" value="NC_003450.3"/>
</dbReference>
<dbReference type="RefSeq" id="WP_003857703.1">
    <property type="nucleotide sequence ID" value="NC_006958.1"/>
</dbReference>
<dbReference type="SMR" id="Q79VJ1"/>
<dbReference type="STRING" id="196627.cg0118"/>
<dbReference type="GeneID" id="1021088"/>
<dbReference type="KEGG" id="cgb:cg0118"/>
<dbReference type="KEGG" id="cgl:Cgl0089"/>
<dbReference type="PATRIC" id="fig|196627.13.peg.90"/>
<dbReference type="eggNOG" id="COG0378">
    <property type="taxonomic scope" value="Bacteria"/>
</dbReference>
<dbReference type="HOGENOM" id="CLU_072144_1_0_11"/>
<dbReference type="OrthoDB" id="9802035at2"/>
<dbReference type="BioCyc" id="CORYNE:G18NG-9638-MONOMER"/>
<dbReference type="Proteomes" id="UP000000582">
    <property type="component" value="Chromosome"/>
</dbReference>
<dbReference type="Proteomes" id="UP000001009">
    <property type="component" value="Chromosome"/>
</dbReference>
<dbReference type="GO" id="GO:0005737">
    <property type="term" value="C:cytoplasm"/>
    <property type="evidence" value="ECO:0007669"/>
    <property type="project" value="UniProtKB-SubCell"/>
</dbReference>
<dbReference type="GO" id="GO:0005525">
    <property type="term" value="F:GTP binding"/>
    <property type="evidence" value="ECO:0007669"/>
    <property type="project" value="UniProtKB-KW"/>
</dbReference>
<dbReference type="GO" id="GO:0003924">
    <property type="term" value="F:GTPase activity"/>
    <property type="evidence" value="ECO:0007669"/>
    <property type="project" value="InterPro"/>
</dbReference>
<dbReference type="GO" id="GO:0016151">
    <property type="term" value="F:nickel cation binding"/>
    <property type="evidence" value="ECO:0007669"/>
    <property type="project" value="UniProtKB-UniRule"/>
</dbReference>
<dbReference type="GO" id="GO:0043419">
    <property type="term" value="P:urea catabolic process"/>
    <property type="evidence" value="ECO:0007669"/>
    <property type="project" value="InterPro"/>
</dbReference>
<dbReference type="CDD" id="cd05540">
    <property type="entry name" value="UreG"/>
    <property type="match status" value="1"/>
</dbReference>
<dbReference type="Gene3D" id="3.40.50.300">
    <property type="entry name" value="P-loop containing nucleotide triphosphate hydrolases"/>
    <property type="match status" value="1"/>
</dbReference>
<dbReference type="HAMAP" id="MF_01389">
    <property type="entry name" value="UreG"/>
    <property type="match status" value="1"/>
</dbReference>
<dbReference type="InterPro" id="IPR003495">
    <property type="entry name" value="CobW/HypB/UreG_nucleotide-bd"/>
</dbReference>
<dbReference type="InterPro" id="IPR027417">
    <property type="entry name" value="P-loop_NTPase"/>
</dbReference>
<dbReference type="InterPro" id="IPR004400">
    <property type="entry name" value="UreG"/>
</dbReference>
<dbReference type="NCBIfam" id="TIGR00101">
    <property type="entry name" value="ureG"/>
    <property type="match status" value="1"/>
</dbReference>
<dbReference type="PANTHER" id="PTHR31715">
    <property type="entry name" value="UREASE ACCESSORY PROTEIN G"/>
    <property type="match status" value="1"/>
</dbReference>
<dbReference type="PANTHER" id="PTHR31715:SF0">
    <property type="entry name" value="UREASE ACCESSORY PROTEIN G"/>
    <property type="match status" value="1"/>
</dbReference>
<dbReference type="Pfam" id="PF02492">
    <property type="entry name" value="cobW"/>
    <property type="match status" value="1"/>
</dbReference>
<dbReference type="PIRSF" id="PIRSF005624">
    <property type="entry name" value="Ni-bind_GTPase"/>
    <property type="match status" value="1"/>
</dbReference>
<dbReference type="SUPFAM" id="SSF52540">
    <property type="entry name" value="P-loop containing nucleoside triphosphate hydrolases"/>
    <property type="match status" value="1"/>
</dbReference>
<name>UREG_CORGL</name>